<comment type="function">
    <text evidence="1">Interferes with one step of hemostasis (modulation of platelet aggregation, or coagulation cascade, for example).</text>
</comment>
<comment type="subcellular location">
    <subcellularLocation>
        <location>Secreted</location>
    </subcellularLocation>
</comment>
<comment type="tissue specificity">
    <text>Expressed by the venom gland.</text>
</comment>
<comment type="similarity">
    <text evidence="3">Belongs to the snaclec family.</text>
</comment>
<accession>P0DMH1</accession>
<reference key="1">
    <citation type="journal article" date="2008" name="J. Proteomics">
        <title>Snake venomics of the Brazilian pitvipers Bothrops cotiara and Bothrops fonsecai. Identification of taxonomy markers.</title>
        <authorList>
            <person name="Tashima A.K."/>
            <person name="Sanz L."/>
            <person name="Camargo A.C."/>
            <person name="Serrano S.M."/>
            <person name="Calvete J.J."/>
        </authorList>
    </citation>
    <scope>PROTEIN SEQUENCE</scope>
    <scope>IDENTIFICATION BY MASS SPECTROMETRY</scope>
    <source>
        <tissue>Venom</tissue>
    </source>
</reference>
<dbReference type="GO" id="GO:0005576">
    <property type="term" value="C:extracellular region"/>
    <property type="evidence" value="ECO:0007669"/>
    <property type="project" value="UniProtKB-SubCell"/>
</dbReference>
<dbReference type="GO" id="GO:0090729">
    <property type="term" value="F:toxin activity"/>
    <property type="evidence" value="ECO:0007669"/>
    <property type="project" value="UniProtKB-KW"/>
</dbReference>
<keyword id="KW-0903">Direct protein sequencing</keyword>
<keyword id="KW-1015">Disulfide bond</keyword>
<keyword id="KW-1199">Hemostasis impairing toxin</keyword>
<keyword id="KW-0964">Secreted</keyword>
<keyword id="KW-0800">Toxin</keyword>
<organism>
    <name type="scientific">Bothrops fonsecai</name>
    <name type="common">Fonseca's lancehead</name>
    <name type="synonym">Rhinocerophis fonsecai</name>
    <dbReference type="NCBI Taxonomy" id="157549"/>
    <lineage>
        <taxon>Eukaryota</taxon>
        <taxon>Metazoa</taxon>
        <taxon>Chordata</taxon>
        <taxon>Craniata</taxon>
        <taxon>Vertebrata</taxon>
        <taxon>Euteleostomi</taxon>
        <taxon>Lepidosauria</taxon>
        <taxon>Squamata</taxon>
        <taxon>Bifurcata</taxon>
        <taxon>Unidentata</taxon>
        <taxon>Episquamata</taxon>
        <taxon>Toxicofera</taxon>
        <taxon>Serpentes</taxon>
        <taxon>Colubroidea</taxon>
        <taxon>Viperidae</taxon>
        <taxon>Crotalinae</taxon>
        <taxon>Bothrops</taxon>
    </lineage>
</organism>
<feature type="chain" id="PRO_0000428811" description="Snaclec Bfon18">
    <location>
        <begin position="1"/>
        <end position="15" status="greater than"/>
    </location>
</feature>
<feature type="domain" description="C-type lectin" evidence="2">
    <location>
        <begin position="1"/>
        <end position="15" status="greater than"/>
    </location>
</feature>
<feature type="disulfide bond" evidence="2">
    <location>
        <begin position="2"/>
        <end position="13"/>
    </location>
</feature>
<feature type="non-terminal residue">
    <location>
        <position position="15"/>
    </location>
</feature>
<protein>
    <recommendedName>
        <fullName>Snaclec Bfon18</fullName>
    </recommendedName>
</protein>
<name>SL_BOTFO</name>
<proteinExistence type="evidence at protein level"/>
<sequence length="15" mass="1787">DCPSDWSPYEGHCYK</sequence>
<evidence type="ECO:0000250" key="1"/>
<evidence type="ECO:0000255" key="2">
    <source>
        <dbReference type="PROSITE-ProRule" id="PRU00040"/>
    </source>
</evidence>
<evidence type="ECO:0000305" key="3"/>